<protein>
    <recommendedName>
        <fullName>Kappa-casein</fullName>
    </recommendedName>
</protein>
<gene>
    <name type="primary">CSN3</name>
    <name type="synonym">CSN10</name>
    <name type="synonym">CSNK</name>
</gene>
<evidence type="ECO:0000250" key="1"/>
<evidence type="ECO:0000250" key="2">
    <source>
        <dbReference type="UniProtKB" id="P02668"/>
    </source>
</evidence>
<evidence type="ECO:0000250" key="3">
    <source>
        <dbReference type="UniProtKB" id="P02670"/>
    </source>
</evidence>
<evidence type="ECO:0000305" key="4"/>
<keyword id="KW-0903">Direct protein sequencing</keyword>
<keyword id="KW-0325">Glycoprotein</keyword>
<keyword id="KW-0494">Milk protein</keyword>
<keyword id="KW-0597">Phosphoprotein</keyword>
<keyword id="KW-0964">Secreted</keyword>
<keyword id="KW-0732">Signal</keyword>
<name>CASK_BUBBU</name>
<reference key="1">
    <citation type="journal article" date="1995" name="J. Mol. Evol.">
        <title>Molecular phylogeny based on the kappa-casein and cytochrome b sequences in the mammalian suborder ruminantia.</title>
        <authorList>
            <person name="Chikuni K."/>
            <person name="Mori Y."/>
            <person name="Tabata T."/>
            <person name="Saito M."/>
            <person name="Monma M."/>
            <person name="Kosugiyama M."/>
        </authorList>
    </citation>
    <scope>NUCLEOTIDE SEQUENCE [GENOMIC DNA]</scope>
</reference>
<reference key="2">
    <citation type="journal article" date="1977" name="Biochimie">
        <title>Primary structure of the casein macropeptide of kappa casein of buffalo.</title>
        <authorList>
            <person name="Addeo F."/>
            <person name="Mercier J.-C."/>
        </authorList>
    </citation>
    <scope>PROTEIN SEQUENCE OF 116-190</scope>
</reference>
<comment type="function">
    <text>Kappa-casein stabilizes micelle formation, preventing casein precipitation in milk.</text>
</comment>
<comment type="subcellular location">
    <subcellularLocation>
        <location>Secreted</location>
    </subcellularLocation>
</comment>
<comment type="tissue specificity">
    <text>Mammary gland specific. Secreted in milk.</text>
</comment>
<comment type="similarity">
    <text evidence="4">Belongs to the kappa-casein family.</text>
</comment>
<dbReference type="EMBL" id="D14370">
    <property type="protein sequence ID" value="BAA03285.1"/>
    <property type="molecule type" value="Genomic_DNA"/>
</dbReference>
<dbReference type="RefSeq" id="NP_001277901.1">
    <property type="nucleotide sequence ID" value="NM_001290972.1"/>
</dbReference>
<dbReference type="RefSeq" id="XP_006071184.1">
    <property type="nucleotide sequence ID" value="XM_006071122.1"/>
</dbReference>
<dbReference type="Allergome" id="1259">
    <property type="allergen name" value="Bub b 8"/>
</dbReference>
<dbReference type="GlyCosmos" id="P11840">
    <property type="glycosylation" value="8 sites, No reported glycans"/>
</dbReference>
<dbReference type="GeneID" id="102395364"/>
<dbReference type="KEGG" id="bbub:102395364"/>
<dbReference type="CTD" id="1448"/>
<dbReference type="OrthoDB" id="9836334at2759"/>
<dbReference type="GO" id="GO:0005615">
    <property type="term" value="C:extracellular space"/>
    <property type="evidence" value="ECO:0007669"/>
    <property type="project" value="TreeGrafter"/>
</dbReference>
<dbReference type="GO" id="GO:0007595">
    <property type="term" value="P:lactation"/>
    <property type="evidence" value="ECO:0007669"/>
    <property type="project" value="TreeGrafter"/>
</dbReference>
<dbReference type="GO" id="GO:0050821">
    <property type="term" value="P:protein stabilization"/>
    <property type="evidence" value="ECO:0007669"/>
    <property type="project" value="TreeGrafter"/>
</dbReference>
<dbReference type="InterPro" id="IPR000117">
    <property type="entry name" value="Casein_kappa"/>
</dbReference>
<dbReference type="PANTHER" id="PTHR11470">
    <property type="entry name" value="KAPPA CASEIN"/>
    <property type="match status" value="1"/>
</dbReference>
<dbReference type="PANTHER" id="PTHR11470:SF2">
    <property type="entry name" value="KAPPA-CASEIN"/>
    <property type="match status" value="1"/>
</dbReference>
<dbReference type="Pfam" id="PF00997">
    <property type="entry name" value="Casein_kappa"/>
    <property type="match status" value="1"/>
</dbReference>
<dbReference type="PIRSF" id="PIRSF002374">
    <property type="entry name" value="Casein_kappa"/>
    <property type="match status" value="1"/>
</dbReference>
<feature type="signal peptide" evidence="1">
    <location>
        <begin position="1"/>
        <end position="21"/>
    </location>
</feature>
<feature type="chain" id="PRO_0000004489" description="Kappa-casein">
    <location>
        <begin position="22"/>
        <end position="190"/>
    </location>
</feature>
<feature type="site" description="Cleavage; by chymosin/rennin" evidence="1">
    <location>
        <begin position="126"/>
        <end position="127"/>
    </location>
</feature>
<feature type="modified residue" description="Phosphoserine" evidence="2">
    <location>
        <position position="148"/>
    </location>
</feature>
<feature type="modified residue" description="Phosphothreonine" evidence="2">
    <location>
        <position position="166"/>
    </location>
</feature>
<feature type="modified residue" description="Phosphoserine; alternate" evidence="2">
    <location>
        <position position="170"/>
    </location>
</feature>
<feature type="modified residue" description="Phosphoserine" evidence="3">
    <location>
        <position position="187"/>
    </location>
</feature>
<feature type="glycosylation site" description="O-linked (GalNAc...) threonine" evidence="2">
    <location>
        <position position="142"/>
    </location>
</feature>
<feature type="glycosylation site" description="O-linked (GalNAc...) threonine" evidence="2">
    <location>
        <position position="152"/>
    </location>
</feature>
<feature type="glycosylation site" description="O-linked (GalNAc...) serine" evidence="2">
    <location>
        <position position="153"/>
    </location>
</feature>
<feature type="glycosylation site" description="O-linked (GalNAc...) threonine" evidence="2">
    <location>
        <position position="154"/>
    </location>
</feature>
<feature type="glycosylation site" description="O-linked (GalNAc...) threonine" evidence="2">
    <location>
        <position position="157"/>
    </location>
</feature>
<feature type="glycosylation site" description="O-linked (GalNAc...) threonine" evidence="2">
    <location>
        <position position="163"/>
    </location>
</feature>
<feature type="glycosylation site" description="O-linked (GalNAc...) serine; alternate" evidence="2">
    <location>
        <position position="170"/>
    </location>
</feature>
<feature type="glycosylation site" description="O-linked (GalNAc...) threonine" evidence="2">
    <location>
        <position position="186"/>
    </location>
</feature>
<feature type="sequence variant">
    <original>T</original>
    <variation>I</variation>
    <location>
        <position position="156"/>
    </location>
</feature>
<feature type="sequence variant">
    <original>E</original>
    <variation>D</variation>
    <location>
        <position position="172"/>
    </location>
</feature>
<accession>P11840</accession>
<proteinExistence type="evidence at protein level"/>
<organism>
    <name type="scientific">Bubalus bubalis</name>
    <name type="common">Domestic water buffalo</name>
    <dbReference type="NCBI Taxonomy" id="89462"/>
    <lineage>
        <taxon>Eukaryota</taxon>
        <taxon>Metazoa</taxon>
        <taxon>Chordata</taxon>
        <taxon>Craniata</taxon>
        <taxon>Vertebrata</taxon>
        <taxon>Euteleostomi</taxon>
        <taxon>Mammalia</taxon>
        <taxon>Eutheria</taxon>
        <taxon>Laurasiatheria</taxon>
        <taxon>Artiodactyla</taxon>
        <taxon>Ruminantia</taxon>
        <taxon>Pecora</taxon>
        <taxon>Bovidae</taxon>
        <taxon>Bovinae</taxon>
        <taxon>Bubalus</taxon>
    </lineage>
</organism>
<sequence length="190" mass="21398">MMKSFFLVVTILALTLPFLGAQEQNQEQPIRCEKEERFFNDKIAKYIPIQYVLSRYPSYGLNYYQQKPVALINNQFLPYPYYAKPAAVRSPAQILQWQVLPNTVPAKSCQAQPTTMTRHPHPHLSFMAIPPKKNQDKTEIPTINTIVSVEPTSTPTTEAIENTVATLEASSEVIESVPETNTAQVTSTVV</sequence>